<evidence type="ECO:0000250" key="1">
    <source>
        <dbReference type="UniProtKB" id="Q78KK3"/>
    </source>
</evidence>
<evidence type="ECO:0000250" key="2">
    <source>
        <dbReference type="UniProtKB" id="Q96BI1"/>
    </source>
</evidence>
<evidence type="ECO:0000255" key="3"/>
<evidence type="ECO:0000305" key="4"/>
<name>S67A1_RAT</name>
<sequence length="412" mass="43818">MSGQLPSSMVALPRQGIIILTYVLAALELTCLFMQFSIIPYLSRTLGLDSVSFGYLQTTFGVLQLLGGPVFGRFADQRGARAALTLSFLAASALYLLLVASCSPALPGVFLLFASRLPAALMHTLPAAQMVITDLTAPTKRPTALSRLGLCFGIGVIFGSLLGGTLSTAYGIQCPAFLAFVVTLLGAVLSFTCIPVTTKEASVQSAHQGGTSVFDLKAISRLLLLPRVLPVFLVKVISGFPSGLFMVMFSIISMDFFQLEAAQAGYLMSFFGILQMMIQGLVIGRLSTRFPEEALLRSSVLVFAVVGLGMALMSNVFHFCLLLPGLVFSLCALNIVTDSMLTKAVSASDTGTMLGLCASVHPLTRTVGPTLGGLLYRSYGVSILGHVQLMVNLLVLLVLWKKPLSQKGDKAR</sequence>
<reference key="1">
    <citation type="journal article" date="2004" name="Genome Res.">
        <title>The status, quality, and expansion of the NIH full-length cDNA project: the Mammalian Gene Collection (MGC).</title>
        <authorList>
            <consortium name="The MGC Project Team"/>
        </authorList>
    </citation>
    <scope>NUCLEOTIDE SEQUENCE [LARGE SCALE MRNA]</scope>
    <source>
        <tissue>Kidney</tissue>
    </source>
</reference>
<reference key="2">
    <citation type="journal article" date="2004" name="Nature">
        <title>Genome sequence of the Brown Norway rat yields insights into mammalian evolution.</title>
        <authorList>
            <person name="Gibbs R.A."/>
            <person name="Weinstock G.M."/>
            <person name="Metzker M.L."/>
            <person name="Muzny D.M."/>
            <person name="Sodergren E.J."/>
            <person name="Scherer S."/>
            <person name="Scott G."/>
            <person name="Steffen D."/>
            <person name="Worley K.C."/>
            <person name="Burch P.E."/>
            <person name="Okwuonu G."/>
            <person name="Hines S."/>
            <person name="Lewis L."/>
            <person name="Deramo C."/>
            <person name="Delgado O."/>
            <person name="Dugan-Rocha S."/>
            <person name="Miner G."/>
            <person name="Morgan M."/>
            <person name="Hawes A."/>
            <person name="Gill R."/>
            <person name="Holt R.A."/>
            <person name="Adams M.D."/>
            <person name="Amanatides P.G."/>
            <person name="Baden-Tillson H."/>
            <person name="Barnstead M."/>
            <person name="Chin S."/>
            <person name="Evans C.A."/>
            <person name="Ferriera S."/>
            <person name="Fosler C."/>
            <person name="Glodek A."/>
            <person name="Gu Z."/>
            <person name="Jennings D."/>
            <person name="Kraft C.L."/>
            <person name="Nguyen T."/>
            <person name="Pfannkoch C.M."/>
            <person name="Sitter C."/>
            <person name="Sutton G.G."/>
            <person name="Venter J.C."/>
            <person name="Woodage T."/>
            <person name="Smith D."/>
            <person name="Lee H.-M."/>
            <person name="Gustafson E."/>
            <person name="Cahill P."/>
            <person name="Kana A."/>
            <person name="Doucette-Stamm L."/>
            <person name="Weinstock K."/>
            <person name="Fechtel K."/>
            <person name="Weiss R.B."/>
            <person name="Dunn D.M."/>
            <person name="Green E.D."/>
            <person name="Blakesley R.W."/>
            <person name="Bouffard G.G."/>
            <person name="De Jong P.J."/>
            <person name="Osoegawa K."/>
            <person name="Zhu B."/>
            <person name="Marra M."/>
            <person name="Schein J."/>
            <person name="Bosdet I."/>
            <person name="Fjell C."/>
            <person name="Jones S."/>
            <person name="Krzywinski M."/>
            <person name="Mathewson C."/>
            <person name="Siddiqui A."/>
            <person name="Wye N."/>
            <person name="McPherson J."/>
            <person name="Zhao S."/>
            <person name="Fraser C.M."/>
            <person name="Shetty J."/>
            <person name="Shatsman S."/>
            <person name="Geer K."/>
            <person name="Chen Y."/>
            <person name="Abramzon S."/>
            <person name="Nierman W.C."/>
            <person name="Havlak P.H."/>
            <person name="Chen R."/>
            <person name="Durbin K.J."/>
            <person name="Egan A."/>
            <person name="Ren Y."/>
            <person name="Song X.-Z."/>
            <person name="Li B."/>
            <person name="Liu Y."/>
            <person name="Qin X."/>
            <person name="Cawley S."/>
            <person name="Cooney A.J."/>
            <person name="D'Souza L.M."/>
            <person name="Martin K."/>
            <person name="Wu J.Q."/>
            <person name="Gonzalez-Garay M.L."/>
            <person name="Jackson A.R."/>
            <person name="Kalafus K.J."/>
            <person name="McLeod M.P."/>
            <person name="Milosavljevic A."/>
            <person name="Virk D."/>
            <person name="Volkov A."/>
            <person name="Wheeler D.A."/>
            <person name="Zhang Z."/>
            <person name="Bailey J.A."/>
            <person name="Eichler E.E."/>
            <person name="Tuzun E."/>
            <person name="Birney E."/>
            <person name="Mongin E."/>
            <person name="Ureta-Vidal A."/>
            <person name="Woodwark C."/>
            <person name="Zdobnov E."/>
            <person name="Bork P."/>
            <person name="Suyama M."/>
            <person name="Torrents D."/>
            <person name="Alexandersson M."/>
            <person name="Trask B.J."/>
            <person name="Young J.M."/>
            <person name="Huang H."/>
            <person name="Wang H."/>
            <person name="Xing H."/>
            <person name="Daniels S."/>
            <person name="Gietzen D."/>
            <person name="Schmidt J."/>
            <person name="Stevens K."/>
            <person name="Vitt U."/>
            <person name="Wingrove J."/>
            <person name="Camara F."/>
            <person name="Mar Alba M."/>
            <person name="Abril J.F."/>
            <person name="Guigo R."/>
            <person name="Smit A."/>
            <person name="Dubchak I."/>
            <person name="Rubin E.M."/>
            <person name="Couronne O."/>
            <person name="Poliakov A."/>
            <person name="Huebner N."/>
            <person name="Ganten D."/>
            <person name="Goesele C."/>
            <person name="Hummel O."/>
            <person name="Kreitler T."/>
            <person name="Lee Y.-A."/>
            <person name="Monti J."/>
            <person name="Schulz H."/>
            <person name="Zimdahl H."/>
            <person name="Himmelbauer H."/>
            <person name="Lehrach H."/>
            <person name="Jacob H.J."/>
            <person name="Bromberg S."/>
            <person name="Gullings-Handley J."/>
            <person name="Jensen-Seaman M.I."/>
            <person name="Kwitek A.E."/>
            <person name="Lazar J."/>
            <person name="Pasko D."/>
            <person name="Tonellato P.J."/>
            <person name="Twigger S."/>
            <person name="Ponting C.P."/>
            <person name="Duarte J.M."/>
            <person name="Rice S."/>
            <person name="Goodstadt L."/>
            <person name="Beatson S.A."/>
            <person name="Emes R.D."/>
            <person name="Winter E.E."/>
            <person name="Webber C."/>
            <person name="Brandt P."/>
            <person name="Nyakatura G."/>
            <person name="Adetobi M."/>
            <person name="Chiaromonte F."/>
            <person name="Elnitski L."/>
            <person name="Eswara P."/>
            <person name="Hardison R.C."/>
            <person name="Hou M."/>
            <person name="Kolbe D."/>
            <person name="Makova K."/>
            <person name="Miller W."/>
            <person name="Nekrutenko A."/>
            <person name="Riemer C."/>
            <person name="Schwartz S."/>
            <person name="Taylor J."/>
            <person name="Yang S."/>
            <person name="Zhang Y."/>
            <person name="Lindpaintner K."/>
            <person name="Andrews T.D."/>
            <person name="Caccamo M."/>
            <person name="Clamp M."/>
            <person name="Clarke L."/>
            <person name="Curwen V."/>
            <person name="Durbin R.M."/>
            <person name="Eyras E."/>
            <person name="Searle S.M."/>
            <person name="Cooper G.M."/>
            <person name="Batzoglou S."/>
            <person name="Brudno M."/>
            <person name="Sidow A."/>
            <person name="Stone E.A."/>
            <person name="Payseur B.A."/>
            <person name="Bourque G."/>
            <person name="Lopez-Otin C."/>
            <person name="Puente X.S."/>
            <person name="Chakrabarti K."/>
            <person name="Chatterji S."/>
            <person name="Dewey C."/>
            <person name="Pachter L."/>
            <person name="Bray N."/>
            <person name="Yap V.B."/>
            <person name="Caspi A."/>
            <person name="Tesler G."/>
            <person name="Pevzner P.A."/>
            <person name="Haussler D."/>
            <person name="Roskin K.M."/>
            <person name="Baertsch R."/>
            <person name="Clawson H."/>
            <person name="Furey T.S."/>
            <person name="Hinrichs A.S."/>
            <person name="Karolchik D."/>
            <person name="Kent W.J."/>
            <person name="Rosenbloom K.R."/>
            <person name="Trumbower H."/>
            <person name="Weirauch M."/>
            <person name="Cooper D.N."/>
            <person name="Stenson P.D."/>
            <person name="Ma B."/>
            <person name="Brent M."/>
            <person name="Arumugam M."/>
            <person name="Shteynberg D."/>
            <person name="Copley R.R."/>
            <person name="Taylor M.S."/>
            <person name="Riethman H."/>
            <person name="Mudunuri U."/>
            <person name="Peterson J."/>
            <person name="Guyer M."/>
            <person name="Felsenfeld A."/>
            <person name="Old S."/>
            <person name="Mockrin S."/>
            <person name="Collins F.S."/>
        </authorList>
    </citation>
    <scope>NUCLEOTIDE SEQUENCE [LARGE SCALE GENOMIC DNA]</scope>
    <source>
        <strain>Brown Norway</strain>
    </source>
</reference>
<feature type="chain" id="PRO_0000220511" description="Solute carrier family 22 member 18">
    <location>
        <begin position="1"/>
        <end position="412"/>
    </location>
</feature>
<feature type="transmembrane region" description="Helical" evidence="3">
    <location>
        <begin position="16"/>
        <end position="36"/>
    </location>
</feature>
<feature type="transmembrane region" description="Helical" evidence="3">
    <location>
        <begin position="51"/>
        <end position="71"/>
    </location>
</feature>
<feature type="transmembrane region" description="Helical" evidence="3">
    <location>
        <begin position="117"/>
        <end position="137"/>
    </location>
</feature>
<feature type="transmembrane region" description="Helical" evidence="3">
    <location>
        <begin position="148"/>
        <end position="168"/>
    </location>
</feature>
<feature type="transmembrane region" description="Helical" evidence="3">
    <location>
        <begin position="176"/>
        <end position="196"/>
    </location>
</feature>
<feature type="transmembrane region" description="Helical" evidence="3">
    <location>
        <begin position="232"/>
        <end position="252"/>
    </location>
</feature>
<feature type="transmembrane region" description="Helical" evidence="3">
    <location>
        <begin position="264"/>
        <end position="284"/>
    </location>
</feature>
<feature type="transmembrane region" description="Helical" evidence="3">
    <location>
        <begin position="294"/>
        <end position="314"/>
    </location>
</feature>
<feature type="transmembrane region" description="Helical" evidence="3">
    <location>
        <begin position="316"/>
        <end position="336"/>
    </location>
</feature>
<feature type="transmembrane region" description="Helical" evidence="3">
    <location>
        <begin position="380"/>
        <end position="400"/>
    </location>
</feature>
<comment type="function">
    <text evidence="1 2">May act as a transporter of organic cations based on a proton efflux antiport mechanism. May play a role in the transport of chloroquine and quinidine-related compounds in kidney (By similarity). Plays a role in the regulation of lipid metabolism (By similarity).</text>
</comment>
<comment type="subcellular location">
    <subcellularLocation>
        <location evidence="2">Apical cell membrane</location>
        <topology evidence="2">Multi-pass membrane protein</topology>
    </subcellularLocation>
    <text evidence="2">Localized at the apical membrane surface of renal proximal tubules.</text>
</comment>
<comment type="similarity">
    <text evidence="4">Belongs to the major facilitator (TC 2.A.1) superfamily. Organic cation transporter (TC 2.A.1.19) family.</text>
</comment>
<comment type="caution">
    <text evidence="2">Was initially classified as a member of the SLC22 family. However, an evolutionary and phylogenetic analysis suggested that SLC22A18 is unique and that it is most distantly related to SLC22 family members.</text>
</comment>
<organism>
    <name type="scientific">Rattus norvegicus</name>
    <name type="common">Rat</name>
    <dbReference type="NCBI Taxonomy" id="10116"/>
    <lineage>
        <taxon>Eukaryota</taxon>
        <taxon>Metazoa</taxon>
        <taxon>Chordata</taxon>
        <taxon>Craniata</taxon>
        <taxon>Vertebrata</taxon>
        <taxon>Euteleostomi</taxon>
        <taxon>Mammalia</taxon>
        <taxon>Eutheria</taxon>
        <taxon>Euarchontoglires</taxon>
        <taxon>Glires</taxon>
        <taxon>Rodentia</taxon>
        <taxon>Myomorpha</taxon>
        <taxon>Muroidea</taxon>
        <taxon>Muridae</taxon>
        <taxon>Murinae</taxon>
        <taxon>Rattus</taxon>
    </lineage>
</organism>
<keyword id="KW-1003">Cell membrane</keyword>
<keyword id="KW-0406">Ion transport</keyword>
<keyword id="KW-0472">Membrane</keyword>
<keyword id="KW-1185">Reference proteome</keyword>
<keyword id="KW-0769">Symport</keyword>
<keyword id="KW-0812">Transmembrane</keyword>
<keyword id="KW-1133">Transmembrane helix</keyword>
<keyword id="KW-0813">Transport</keyword>
<accession>Q6AY78</accession>
<accession>A0A0G2JSS3</accession>
<proteinExistence type="evidence at transcript level"/>
<dbReference type="EMBL" id="BC079159">
    <property type="protein sequence ID" value="AAH79159.1"/>
    <property type="molecule type" value="mRNA"/>
</dbReference>
<dbReference type="EMBL" id="AC112093">
    <property type="status" value="NOT_ANNOTATED_CDS"/>
    <property type="molecule type" value="Genomic_DNA"/>
</dbReference>
<dbReference type="RefSeq" id="NP_001004260.1">
    <property type="nucleotide sequence ID" value="NM_001004260.1"/>
</dbReference>
<dbReference type="RefSeq" id="XP_006230837.1">
    <property type="nucleotide sequence ID" value="XM_006230775.3"/>
</dbReference>
<dbReference type="SMR" id="Q6AY78"/>
<dbReference type="FunCoup" id="Q6AY78">
    <property type="interactions" value="6"/>
</dbReference>
<dbReference type="STRING" id="10116.ENSRNOP00000027925"/>
<dbReference type="GlyGen" id="Q6AY78">
    <property type="glycosylation" value="1 site"/>
</dbReference>
<dbReference type="PhosphoSitePlus" id="Q6AY78"/>
<dbReference type="PaxDb" id="10116-ENSRNOP00000027925"/>
<dbReference type="PeptideAtlas" id="Q6AY78"/>
<dbReference type="Ensembl" id="ENSRNOT00000027925.5">
    <property type="protein sequence ID" value="ENSRNOP00000027925.3"/>
    <property type="gene ID" value="ENSRNOG00000020562.5"/>
</dbReference>
<dbReference type="GeneID" id="309131"/>
<dbReference type="KEGG" id="rno:309131"/>
<dbReference type="UCSC" id="RGD:1303323">
    <property type="organism name" value="rat"/>
</dbReference>
<dbReference type="AGR" id="RGD:1303323"/>
<dbReference type="CTD" id="18400"/>
<dbReference type="RGD" id="1303323">
    <property type="gene designation" value="Slc22a18"/>
</dbReference>
<dbReference type="eggNOG" id="ENOG502QT94">
    <property type="taxonomic scope" value="Eukaryota"/>
</dbReference>
<dbReference type="GeneTree" id="ENSGT00940000160333"/>
<dbReference type="InParanoid" id="Q6AY78"/>
<dbReference type="OMA" id="RLMKYPR"/>
<dbReference type="OrthoDB" id="91766at9989"/>
<dbReference type="PhylomeDB" id="Q6AY78"/>
<dbReference type="TreeFam" id="TF352510"/>
<dbReference type="Reactome" id="R-RNO-549127">
    <property type="pathway name" value="Organic cation transport"/>
</dbReference>
<dbReference type="PRO" id="PR:Q6AY78"/>
<dbReference type="Proteomes" id="UP000002494">
    <property type="component" value="Chromosome 1"/>
</dbReference>
<dbReference type="Bgee" id="ENSRNOG00000020562">
    <property type="expression patterns" value="Expressed in liver and 18 other cell types or tissues"/>
</dbReference>
<dbReference type="GO" id="GO:0016324">
    <property type="term" value="C:apical plasma membrane"/>
    <property type="evidence" value="ECO:0000266"/>
    <property type="project" value="RGD"/>
</dbReference>
<dbReference type="GO" id="GO:0005737">
    <property type="term" value="C:cytoplasm"/>
    <property type="evidence" value="ECO:0000266"/>
    <property type="project" value="RGD"/>
</dbReference>
<dbReference type="GO" id="GO:0005635">
    <property type="term" value="C:nuclear envelope"/>
    <property type="evidence" value="ECO:0000266"/>
    <property type="project" value="RGD"/>
</dbReference>
<dbReference type="GO" id="GO:0015293">
    <property type="term" value="F:symporter activity"/>
    <property type="evidence" value="ECO:0007669"/>
    <property type="project" value="UniProtKB-KW"/>
</dbReference>
<dbReference type="GO" id="GO:0031625">
    <property type="term" value="F:ubiquitin protein ligase binding"/>
    <property type="evidence" value="ECO:0000266"/>
    <property type="project" value="RGD"/>
</dbReference>
<dbReference type="GO" id="GO:0006811">
    <property type="term" value="P:monoatomic ion transport"/>
    <property type="evidence" value="ECO:0007669"/>
    <property type="project" value="UniProtKB-KW"/>
</dbReference>
<dbReference type="GO" id="GO:1990961">
    <property type="term" value="P:xenobiotic detoxification by transmembrane export across the plasma membrane"/>
    <property type="evidence" value="ECO:0000266"/>
    <property type="project" value="RGD"/>
</dbReference>
<dbReference type="GO" id="GO:0042908">
    <property type="term" value="P:xenobiotic transport"/>
    <property type="evidence" value="ECO:0000266"/>
    <property type="project" value="RGD"/>
</dbReference>
<dbReference type="CDD" id="cd17331">
    <property type="entry name" value="MFS_SLC22A18"/>
    <property type="match status" value="1"/>
</dbReference>
<dbReference type="FunFam" id="1.20.1250.20:FF:000297">
    <property type="entry name" value="Solute carrier family 22 member 18"/>
    <property type="match status" value="1"/>
</dbReference>
<dbReference type="Gene3D" id="1.20.1250.20">
    <property type="entry name" value="MFS general substrate transporter like domains"/>
    <property type="match status" value="1"/>
</dbReference>
<dbReference type="InterPro" id="IPR011701">
    <property type="entry name" value="MFS"/>
</dbReference>
<dbReference type="InterPro" id="IPR020846">
    <property type="entry name" value="MFS_dom"/>
</dbReference>
<dbReference type="InterPro" id="IPR036259">
    <property type="entry name" value="MFS_trans_sf"/>
</dbReference>
<dbReference type="InterPro" id="IPR001958">
    <property type="entry name" value="Tet-R_TetA/multi-R_MdtG-like"/>
</dbReference>
<dbReference type="PANTHER" id="PTHR24002">
    <property type="entry name" value="SOLUTE CARRIER FAMILY 22 MEMBER 18"/>
    <property type="match status" value="1"/>
</dbReference>
<dbReference type="PANTHER" id="PTHR24002:SF3">
    <property type="entry name" value="SOLUTE CARRIER FAMILY 22 MEMBER 18"/>
    <property type="match status" value="1"/>
</dbReference>
<dbReference type="Pfam" id="PF07690">
    <property type="entry name" value="MFS_1"/>
    <property type="match status" value="1"/>
</dbReference>
<dbReference type="PRINTS" id="PR01035">
    <property type="entry name" value="TCRTETA"/>
</dbReference>
<dbReference type="SUPFAM" id="SSF103473">
    <property type="entry name" value="MFS general substrate transporter"/>
    <property type="match status" value="1"/>
</dbReference>
<dbReference type="PROSITE" id="PS50850">
    <property type="entry name" value="MFS"/>
    <property type="match status" value="1"/>
</dbReference>
<gene>
    <name type="primary">Slc67a1</name>
    <name type="synonym">Orctl2</name>
    <name type="synonym">Slc22a18</name>
    <name type="synonym">Tssc5</name>
</gene>
<protein>
    <recommendedName>
        <fullName>Solute carrier family 22 member 18</fullName>
    </recommendedName>
    <alternativeName>
        <fullName>Organic cation transporter-like protein 2</fullName>
        <shortName>ORCTL-2</shortName>
    </alternativeName>
</protein>